<protein>
    <recommendedName>
        <fullName evidence="1">Large ribosomal subunit protein uL14</fullName>
    </recommendedName>
    <alternativeName>
        <fullName evidence="2">50S ribosomal protein L14</fullName>
    </alternativeName>
</protein>
<dbReference type="EMBL" id="CP000949">
    <property type="protein sequence ID" value="ACA75215.1"/>
    <property type="molecule type" value="Genomic_DNA"/>
</dbReference>
<dbReference type="SMR" id="B1JDX4"/>
<dbReference type="STRING" id="390235.PputW619_4739"/>
<dbReference type="KEGG" id="ppw:PputW619_4739"/>
<dbReference type="eggNOG" id="COG0093">
    <property type="taxonomic scope" value="Bacteria"/>
</dbReference>
<dbReference type="HOGENOM" id="CLU_095071_2_1_6"/>
<dbReference type="OrthoDB" id="9806379at2"/>
<dbReference type="GO" id="GO:0022625">
    <property type="term" value="C:cytosolic large ribosomal subunit"/>
    <property type="evidence" value="ECO:0007669"/>
    <property type="project" value="TreeGrafter"/>
</dbReference>
<dbReference type="GO" id="GO:0070180">
    <property type="term" value="F:large ribosomal subunit rRNA binding"/>
    <property type="evidence" value="ECO:0007669"/>
    <property type="project" value="TreeGrafter"/>
</dbReference>
<dbReference type="GO" id="GO:0003735">
    <property type="term" value="F:structural constituent of ribosome"/>
    <property type="evidence" value="ECO:0007669"/>
    <property type="project" value="InterPro"/>
</dbReference>
<dbReference type="GO" id="GO:0006412">
    <property type="term" value="P:translation"/>
    <property type="evidence" value="ECO:0007669"/>
    <property type="project" value="UniProtKB-UniRule"/>
</dbReference>
<dbReference type="CDD" id="cd00337">
    <property type="entry name" value="Ribosomal_uL14"/>
    <property type="match status" value="1"/>
</dbReference>
<dbReference type="FunFam" id="2.40.150.20:FF:000001">
    <property type="entry name" value="50S ribosomal protein L14"/>
    <property type="match status" value="1"/>
</dbReference>
<dbReference type="Gene3D" id="2.40.150.20">
    <property type="entry name" value="Ribosomal protein L14"/>
    <property type="match status" value="1"/>
</dbReference>
<dbReference type="HAMAP" id="MF_01367">
    <property type="entry name" value="Ribosomal_uL14"/>
    <property type="match status" value="1"/>
</dbReference>
<dbReference type="InterPro" id="IPR000218">
    <property type="entry name" value="Ribosomal_uL14"/>
</dbReference>
<dbReference type="InterPro" id="IPR005745">
    <property type="entry name" value="Ribosomal_uL14_bac-type"/>
</dbReference>
<dbReference type="InterPro" id="IPR019972">
    <property type="entry name" value="Ribosomal_uL14_CS"/>
</dbReference>
<dbReference type="InterPro" id="IPR036853">
    <property type="entry name" value="Ribosomal_uL14_sf"/>
</dbReference>
<dbReference type="NCBIfam" id="TIGR01067">
    <property type="entry name" value="rplN_bact"/>
    <property type="match status" value="1"/>
</dbReference>
<dbReference type="PANTHER" id="PTHR11761">
    <property type="entry name" value="50S/60S RIBOSOMAL PROTEIN L14/L23"/>
    <property type="match status" value="1"/>
</dbReference>
<dbReference type="PANTHER" id="PTHR11761:SF3">
    <property type="entry name" value="LARGE RIBOSOMAL SUBUNIT PROTEIN UL14M"/>
    <property type="match status" value="1"/>
</dbReference>
<dbReference type="Pfam" id="PF00238">
    <property type="entry name" value="Ribosomal_L14"/>
    <property type="match status" value="1"/>
</dbReference>
<dbReference type="SMART" id="SM01374">
    <property type="entry name" value="Ribosomal_L14"/>
    <property type="match status" value="1"/>
</dbReference>
<dbReference type="SUPFAM" id="SSF50193">
    <property type="entry name" value="Ribosomal protein L14"/>
    <property type="match status" value="1"/>
</dbReference>
<dbReference type="PROSITE" id="PS00049">
    <property type="entry name" value="RIBOSOMAL_L14"/>
    <property type="match status" value="1"/>
</dbReference>
<sequence>MIQTQSMLDVADNSGARRVMCIKVLGGSHRRYAGIGDIIKVTVKEAIPRGKVKKGQVMTAVVVRTRHGVRRADGSIIRFDGNAAVLLNTKQEPIGTRIFGPVTRELRTEKFMKIVSLAPEVL</sequence>
<feature type="chain" id="PRO_1000144315" description="Large ribosomal subunit protein uL14">
    <location>
        <begin position="1"/>
        <end position="122"/>
    </location>
</feature>
<keyword id="KW-0687">Ribonucleoprotein</keyword>
<keyword id="KW-0689">Ribosomal protein</keyword>
<keyword id="KW-0694">RNA-binding</keyword>
<keyword id="KW-0699">rRNA-binding</keyword>
<name>RL14_PSEPW</name>
<evidence type="ECO:0000255" key="1">
    <source>
        <dbReference type="HAMAP-Rule" id="MF_01367"/>
    </source>
</evidence>
<evidence type="ECO:0000305" key="2"/>
<proteinExistence type="inferred from homology"/>
<accession>B1JDX4</accession>
<organism>
    <name type="scientific">Pseudomonas putida (strain W619)</name>
    <dbReference type="NCBI Taxonomy" id="390235"/>
    <lineage>
        <taxon>Bacteria</taxon>
        <taxon>Pseudomonadati</taxon>
        <taxon>Pseudomonadota</taxon>
        <taxon>Gammaproteobacteria</taxon>
        <taxon>Pseudomonadales</taxon>
        <taxon>Pseudomonadaceae</taxon>
        <taxon>Pseudomonas</taxon>
    </lineage>
</organism>
<comment type="function">
    <text evidence="1">Binds to 23S rRNA. Forms part of two intersubunit bridges in the 70S ribosome.</text>
</comment>
<comment type="subunit">
    <text evidence="1">Part of the 50S ribosomal subunit. Forms a cluster with proteins L3 and L19. In the 70S ribosome, L14 and L19 interact and together make contacts with the 16S rRNA in bridges B5 and B8.</text>
</comment>
<comment type="similarity">
    <text evidence="1">Belongs to the universal ribosomal protein uL14 family.</text>
</comment>
<gene>
    <name evidence="1" type="primary">rplN</name>
    <name type="ordered locus">PputW619_4739</name>
</gene>
<reference key="1">
    <citation type="submission" date="2008-02" db="EMBL/GenBank/DDBJ databases">
        <title>Complete sequence of Pseudomonas putida W619.</title>
        <authorList>
            <person name="Copeland A."/>
            <person name="Lucas S."/>
            <person name="Lapidus A."/>
            <person name="Barry K."/>
            <person name="Detter J.C."/>
            <person name="Glavina del Rio T."/>
            <person name="Dalin E."/>
            <person name="Tice H."/>
            <person name="Pitluck S."/>
            <person name="Chain P."/>
            <person name="Malfatti S."/>
            <person name="Shin M."/>
            <person name="Vergez L."/>
            <person name="Schmutz J."/>
            <person name="Larimer F."/>
            <person name="Land M."/>
            <person name="Hauser L."/>
            <person name="Kyrpides N."/>
            <person name="Kim E."/>
            <person name="Taghavi S."/>
            <person name="Vangronsveld D."/>
            <person name="van der Lelie D."/>
            <person name="Richardson P."/>
        </authorList>
    </citation>
    <scope>NUCLEOTIDE SEQUENCE [LARGE SCALE GENOMIC DNA]</scope>
    <source>
        <strain>W619</strain>
    </source>
</reference>